<comment type="function">
    <text evidence="4">Transcription factor that plays a role downstream of the MCK1-MKK2-MPS1 cascade (PubMed:22321443). Required for hyphal morphogenesis and pathogenicity (PubMed:22321443). Is an important oxidative stress response regulator and plays a positive role in the regulation of extracellular peroxidases (PubMed:22321443).</text>
</comment>
<comment type="subcellular location">
    <subcellularLocation>
        <location evidence="7">Nucleus</location>
    </subcellularLocation>
</comment>
<comment type="disruption phenotype">
    <text evidence="4">Leads to deformed and non-melanized appressoria that are unable to penetrate plant surface due to the impaired cell wall integrity (PubMed:22321443). Shows abnormal hyphae as a result of altered chitin synthesis (PubMed:22321443). Leads to sensitivity to H(2)O(2) (PubMed:22321443).</text>
</comment>
<evidence type="ECO:0000255" key="1"/>
<evidence type="ECO:0000255" key="2">
    <source>
        <dbReference type="PROSITE-ProRule" id="PRU00630"/>
    </source>
</evidence>
<evidence type="ECO:0000256" key="3">
    <source>
        <dbReference type="SAM" id="MobiDB-lite"/>
    </source>
</evidence>
<evidence type="ECO:0000269" key="4">
    <source>
    </source>
</evidence>
<evidence type="ECO:0000303" key="5">
    <source>
    </source>
</evidence>
<evidence type="ECO:0000303" key="6">
    <source ref="1"/>
</evidence>
<evidence type="ECO:0000305" key="7">
    <source>
    </source>
</evidence>
<organism>
    <name type="scientific">Pyricularia oryzae</name>
    <name type="common">Rice blast fungus</name>
    <name type="synonym">Magnaporthe oryzae</name>
    <dbReference type="NCBI Taxonomy" id="318829"/>
    <lineage>
        <taxon>Eukaryota</taxon>
        <taxon>Fungi</taxon>
        <taxon>Dikarya</taxon>
        <taxon>Ascomycota</taxon>
        <taxon>Pezizomycotina</taxon>
        <taxon>Sordariomycetes</taxon>
        <taxon>Sordariomycetidae</taxon>
        <taxon>Magnaporthales</taxon>
        <taxon>Pyriculariaceae</taxon>
        <taxon>Pyricularia</taxon>
    </lineage>
</organism>
<reference key="1">
    <citation type="submission" date="2005-08" db="EMBL/GenBank/DDBJ databases">
        <authorList>
            <person name="Cartwright Z.J."/>
            <person name="Talbot N.J."/>
        </authorList>
    </citation>
    <scope>NUCLEOTIDE SEQUENCE [GENOMIC DNA]</scope>
    <source>
        <strain>Guyane 11</strain>
    </source>
</reference>
<reference key="2">
    <citation type="journal article" date="2012" name="Mol. Plant Pathol.">
        <title>MoSwi6, an APSES family transcription factor, interacts with MoMps1 and is required for hyphal and conidial morphogenesis, appressorial function and pathogenicity of Magnaporthe oryzae.</title>
        <authorList>
            <person name="Qi Z."/>
            <person name="Wang Q."/>
            <person name="Dou X."/>
            <person name="Wang W."/>
            <person name="Zhao Q."/>
            <person name="Lv R."/>
            <person name="Zhang H."/>
            <person name="Zheng X."/>
            <person name="Wang P."/>
            <person name="Zhang Z."/>
        </authorList>
    </citation>
    <scope>FUNCTION</scope>
    <scope>DISRUPTION PHENOTYPE</scope>
    <scope>INTERACTION WITH PPS1</scope>
</reference>
<protein>
    <recommendedName>
        <fullName evidence="5">Transcription factor SWI6</fullName>
    </recommendedName>
</protein>
<keyword id="KW-0040">ANK repeat</keyword>
<keyword id="KW-0175">Coiled coil</keyword>
<keyword id="KW-0183">Conidiation</keyword>
<keyword id="KW-0539">Nucleus</keyword>
<keyword id="KW-0677">Repeat</keyword>
<keyword id="KW-0749">Sporulation</keyword>
<keyword id="KW-0804">Transcription</keyword>
<keyword id="KW-0805">Transcription regulation</keyword>
<keyword id="KW-0843">Virulence</keyword>
<dbReference type="EMBL" id="DQ168586">
    <property type="protein sequence ID" value="ABA02072.1"/>
    <property type="molecule type" value="Genomic_DNA"/>
</dbReference>
<dbReference type="SMR" id="Q3S405"/>
<dbReference type="OMA" id="HHIAMMA"/>
<dbReference type="GO" id="GO:0030907">
    <property type="term" value="C:MBF transcription complex"/>
    <property type="evidence" value="ECO:0007669"/>
    <property type="project" value="TreeGrafter"/>
</dbReference>
<dbReference type="GO" id="GO:0033309">
    <property type="term" value="C:SBF transcription complex"/>
    <property type="evidence" value="ECO:0007669"/>
    <property type="project" value="TreeGrafter"/>
</dbReference>
<dbReference type="GO" id="GO:0003677">
    <property type="term" value="F:DNA binding"/>
    <property type="evidence" value="ECO:0007669"/>
    <property type="project" value="InterPro"/>
</dbReference>
<dbReference type="GO" id="GO:0001228">
    <property type="term" value="F:DNA-binding transcription activator activity, RNA polymerase II-specific"/>
    <property type="evidence" value="ECO:0007669"/>
    <property type="project" value="UniProtKB-ARBA"/>
</dbReference>
<dbReference type="GO" id="GO:0003713">
    <property type="term" value="F:transcription coactivator activity"/>
    <property type="evidence" value="ECO:0007669"/>
    <property type="project" value="TreeGrafter"/>
</dbReference>
<dbReference type="GO" id="GO:0048315">
    <property type="term" value="P:conidium formation"/>
    <property type="evidence" value="ECO:0007669"/>
    <property type="project" value="UniProtKB-KW"/>
</dbReference>
<dbReference type="GO" id="GO:0030435">
    <property type="term" value="P:sporulation resulting in formation of a cellular spore"/>
    <property type="evidence" value="ECO:0007669"/>
    <property type="project" value="UniProtKB-KW"/>
</dbReference>
<dbReference type="FunFam" id="3.10.260.10:FF:000001">
    <property type="entry name" value="APSES transcription factor (MbpA)"/>
    <property type="match status" value="1"/>
</dbReference>
<dbReference type="FunFam" id="1.25.40.20:FF:000365">
    <property type="entry name" value="Start control protein cdc10"/>
    <property type="match status" value="1"/>
</dbReference>
<dbReference type="Gene3D" id="1.25.40.20">
    <property type="entry name" value="Ankyrin repeat-containing domain"/>
    <property type="match status" value="1"/>
</dbReference>
<dbReference type="Gene3D" id="3.10.260.10">
    <property type="entry name" value="Transcription regulator HTH, APSES-type DNA-binding domain"/>
    <property type="match status" value="1"/>
</dbReference>
<dbReference type="InterPro" id="IPR002110">
    <property type="entry name" value="Ankyrin_rpt"/>
</dbReference>
<dbReference type="InterPro" id="IPR036770">
    <property type="entry name" value="Ankyrin_rpt-contain_sf"/>
</dbReference>
<dbReference type="InterPro" id="IPR036887">
    <property type="entry name" value="HTH_APSES_sf"/>
</dbReference>
<dbReference type="InterPro" id="IPR018004">
    <property type="entry name" value="KilA/APSES_HTH"/>
</dbReference>
<dbReference type="InterPro" id="IPR051642">
    <property type="entry name" value="SWI6-like"/>
</dbReference>
<dbReference type="InterPro" id="IPR003163">
    <property type="entry name" value="Tscrpt_reg_HTH_APSES-type"/>
</dbReference>
<dbReference type="PANTHER" id="PTHR43828">
    <property type="entry name" value="ASPARAGINASE"/>
    <property type="match status" value="1"/>
</dbReference>
<dbReference type="PANTHER" id="PTHR43828:SF3">
    <property type="entry name" value="CHROMO DOMAIN-CONTAINING PROTEIN"/>
    <property type="match status" value="1"/>
</dbReference>
<dbReference type="Pfam" id="PF13637">
    <property type="entry name" value="Ank_4"/>
    <property type="match status" value="1"/>
</dbReference>
<dbReference type="Pfam" id="PF04383">
    <property type="entry name" value="KilA-N"/>
    <property type="match status" value="1"/>
</dbReference>
<dbReference type="SMART" id="SM00248">
    <property type="entry name" value="ANK"/>
    <property type="match status" value="3"/>
</dbReference>
<dbReference type="SMART" id="SM01252">
    <property type="entry name" value="KilA-N"/>
    <property type="match status" value="1"/>
</dbReference>
<dbReference type="SUPFAM" id="SSF48403">
    <property type="entry name" value="Ankyrin repeat"/>
    <property type="match status" value="1"/>
</dbReference>
<dbReference type="SUPFAM" id="SSF54616">
    <property type="entry name" value="DNA-binding domain of Mlu1-box binding protein MBP1"/>
    <property type="match status" value="1"/>
</dbReference>
<dbReference type="PROSITE" id="PS50297">
    <property type="entry name" value="ANK_REP_REGION"/>
    <property type="match status" value="1"/>
</dbReference>
<dbReference type="PROSITE" id="PS50088">
    <property type="entry name" value="ANK_REPEAT"/>
    <property type="match status" value="2"/>
</dbReference>
<dbReference type="PROSITE" id="PS51299">
    <property type="entry name" value="HTH_APSES"/>
    <property type="match status" value="1"/>
</dbReference>
<feature type="chain" id="PRO_0000453105" description="Transcription factor SWI6">
    <location>
        <begin position="1"/>
        <end position="895"/>
    </location>
</feature>
<feature type="domain" description="HTH APSES-type" evidence="2">
    <location>
        <begin position="112"/>
        <end position="219"/>
    </location>
</feature>
<feature type="repeat" description="ANK 1" evidence="1">
    <location>
        <begin position="458"/>
        <end position="488"/>
    </location>
</feature>
<feature type="repeat" description="ANK 2" evidence="1">
    <location>
        <begin position="607"/>
        <end position="636"/>
    </location>
</feature>
<feature type="DNA-binding region" description="H-T-H motif" evidence="2">
    <location>
        <begin position="143"/>
        <end position="164"/>
    </location>
</feature>
<feature type="region of interest" description="Disordered" evidence="3">
    <location>
        <begin position="1"/>
        <end position="107"/>
    </location>
</feature>
<feature type="region of interest" description="Disordered" evidence="3">
    <location>
        <begin position="272"/>
        <end position="293"/>
    </location>
</feature>
<feature type="region of interest" description="Disordered" evidence="3">
    <location>
        <begin position="323"/>
        <end position="358"/>
    </location>
</feature>
<feature type="region of interest" description="Disordered" evidence="3">
    <location>
        <begin position="653"/>
        <end position="684"/>
    </location>
</feature>
<feature type="coiled-coil region" evidence="1">
    <location>
        <begin position="698"/>
        <end position="759"/>
    </location>
</feature>
<feature type="compositionally biased region" description="Polar residues" evidence="3">
    <location>
        <begin position="1"/>
        <end position="45"/>
    </location>
</feature>
<feature type="compositionally biased region" description="Low complexity" evidence="3">
    <location>
        <begin position="64"/>
        <end position="100"/>
    </location>
</feature>
<feature type="compositionally biased region" description="Polar residues" evidence="3">
    <location>
        <begin position="674"/>
        <end position="684"/>
    </location>
</feature>
<name>SWI6_PYROR</name>
<sequence length="895" mass="97714">MASTVAGNSFVSQQHPGNLHSANLQSQSQGFRRQNSTSSVPSTASFDPPNGSIANTGSQKHHPMSSQQSQPPASQQSFSMSQTGSQPQPSQSSFRSYSDQNVPQQPQEASPIYTAVYSNVEVYEFEVNGVAVMKRIGDSKLNATQILKVAGVEKGKRTKILEKEIQTGEHEKVQGGYGKYQGTWIKYERALEVCRQYGVEELLRPLLEYNRNPDGSVSQANLNTPTKEQAMAAQRKKMYNSGADSRNNNGGGTFFKNISQTAHSAMTAISKARFDSPGPRGRNGPTRAPSFQRQLSTQSIDDFHGGNSQASNFAENFPPQDVNMAFSAGSEPQPGGLNGTEPPRKRQRMDMTPANSFGAYANNSQMQAYADAFPGSPTEPNDSFIYTQHAAANDTLLQQQHDQQTPLQPLPYEQSVEAENKRSMLMSIFMNDGMSEQARVDTLRQIHPRDLDMPIDSQCHTALHWAATLSRMTILRRLIEAGASPFRVNTSGETPLMRACIVTNSHDNDSMPAILDILGNTMEVRDSKERTVLHHIALTSAVSGRSAASRYYLQCLLGWVVRQGAANGGQLNSQTFNGGATVSQSQNATRLDLGRFMSEMLNAQDSAGDTALNIAARIGNRSIISQLLEVCASPHIANRSGLRPTDFGIGVDSDGAMKTKGDSGGDVENGDVGGSSQKSNESSNEIVTSITHLLTETSANFQEEIKNKQKNIDSLHATLRLTTTDVNDLRRKLDEAQARVKAQQLARQKVTNLQRAEERERYRLTQLEQTTGRRDIASANGWEAESNTLLATINATTNGEPDADAKLPSSALLRARIEAVKKQTESTRQSVVALKGRSREVEGRYRHLVALATKCRDEDVDSTMEGLLKAVESEKGELEIGRVRRFLGGVEGVIG</sequence>
<accession>Q3S405</accession>
<gene>
    <name evidence="6" type="primary">SWI6</name>
</gene>
<proteinExistence type="evidence at protein level"/>